<organism>
    <name type="scientific">Listeria monocytogenes serovar 1/2a (strain ATCC BAA-679 / EGD-e)</name>
    <dbReference type="NCBI Taxonomy" id="169963"/>
    <lineage>
        <taxon>Bacteria</taxon>
        <taxon>Bacillati</taxon>
        <taxon>Bacillota</taxon>
        <taxon>Bacilli</taxon>
        <taxon>Bacillales</taxon>
        <taxon>Listeriaceae</taxon>
        <taxon>Listeria</taxon>
    </lineage>
</organism>
<dbReference type="EMBL" id="AL591981">
    <property type="protein sequence ID" value="CAD00029.1"/>
    <property type="molecule type" value="Genomic_DNA"/>
</dbReference>
<dbReference type="PIR" id="AG1318">
    <property type="entry name" value="AG1318"/>
</dbReference>
<dbReference type="RefSeq" id="NP_465475.1">
    <property type="nucleotide sequence ID" value="NC_003210.1"/>
</dbReference>
<dbReference type="RefSeq" id="WP_003723598.1">
    <property type="nucleotide sequence ID" value="NZ_CP149495.1"/>
</dbReference>
<dbReference type="SMR" id="Q8Y5V4"/>
<dbReference type="STRING" id="169963.gene:17594636"/>
<dbReference type="PaxDb" id="169963-lmo1951"/>
<dbReference type="EnsemblBacteria" id="CAD00029">
    <property type="protein sequence ID" value="CAD00029"/>
    <property type="gene ID" value="CAD00029"/>
</dbReference>
<dbReference type="GeneID" id="987973"/>
<dbReference type="KEGG" id="lmo:lmo1951"/>
<dbReference type="PATRIC" id="fig|169963.11.peg.1998"/>
<dbReference type="eggNOG" id="COG1354">
    <property type="taxonomic scope" value="Bacteria"/>
</dbReference>
<dbReference type="HOGENOM" id="CLU_038686_3_1_9"/>
<dbReference type="OrthoDB" id="9811016at2"/>
<dbReference type="PhylomeDB" id="Q8Y5V4"/>
<dbReference type="BioCyc" id="LMON169963:LMO1951-MONOMER"/>
<dbReference type="Proteomes" id="UP000000817">
    <property type="component" value="Chromosome"/>
</dbReference>
<dbReference type="GO" id="GO:0005737">
    <property type="term" value="C:cytoplasm"/>
    <property type="evidence" value="ECO:0007669"/>
    <property type="project" value="UniProtKB-SubCell"/>
</dbReference>
<dbReference type="GO" id="GO:0051301">
    <property type="term" value="P:cell division"/>
    <property type="evidence" value="ECO:0007669"/>
    <property type="project" value="UniProtKB-KW"/>
</dbReference>
<dbReference type="GO" id="GO:0007059">
    <property type="term" value="P:chromosome segregation"/>
    <property type="evidence" value="ECO:0007669"/>
    <property type="project" value="UniProtKB-UniRule"/>
</dbReference>
<dbReference type="GO" id="GO:0006260">
    <property type="term" value="P:DNA replication"/>
    <property type="evidence" value="ECO:0007669"/>
    <property type="project" value="UniProtKB-UniRule"/>
</dbReference>
<dbReference type="Gene3D" id="6.10.250.2410">
    <property type="match status" value="1"/>
</dbReference>
<dbReference type="Gene3D" id="1.10.10.580">
    <property type="entry name" value="Structural maintenance of chromosome 1. Chain E"/>
    <property type="match status" value="1"/>
</dbReference>
<dbReference type="HAMAP" id="MF_01805">
    <property type="entry name" value="ScpA"/>
    <property type="match status" value="1"/>
</dbReference>
<dbReference type="InterPro" id="IPR003768">
    <property type="entry name" value="ScpA"/>
</dbReference>
<dbReference type="InterPro" id="IPR023093">
    <property type="entry name" value="ScpA-like_C"/>
</dbReference>
<dbReference type="NCBIfam" id="NF000995">
    <property type="entry name" value="PRK00104.1-4"/>
    <property type="match status" value="1"/>
</dbReference>
<dbReference type="PANTHER" id="PTHR33969">
    <property type="entry name" value="SEGREGATION AND CONDENSATION PROTEIN A"/>
    <property type="match status" value="1"/>
</dbReference>
<dbReference type="PANTHER" id="PTHR33969:SF2">
    <property type="entry name" value="SEGREGATION AND CONDENSATION PROTEIN A"/>
    <property type="match status" value="1"/>
</dbReference>
<dbReference type="Pfam" id="PF02616">
    <property type="entry name" value="SMC_ScpA"/>
    <property type="match status" value="1"/>
</dbReference>
<evidence type="ECO:0000255" key="1">
    <source>
        <dbReference type="HAMAP-Rule" id="MF_01805"/>
    </source>
</evidence>
<feature type="chain" id="PRO_0000211092" description="Segregation and condensation protein A">
    <location>
        <begin position="1"/>
        <end position="249"/>
    </location>
</feature>
<protein>
    <recommendedName>
        <fullName evidence="1">Segregation and condensation protein A</fullName>
    </recommendedName>
</protein>
<accession>Q8Y5V4</accession>
<proteinExistence type="inferred from homology"/>
<sequence length="249" mass="29157">MVEMNFKVDAFEGPLDLLLHLIGQLEVDIYDIPMAEITDQYMEFVHTMQEMELDVASEYLVMAATLLAIKSKMLLPKQELEIDYDTLEEEEDPRDALVEKLMEYKRFKEAAKELKEKEAERSFYFSKPPMDLAEYDDGTKVAELDVSLNDMLSAFNKMLRRKKLNKPLHTRITTQEISIDQRMDSVLEKLNLQVNHRLRFDELFEEQTKEQLVVTFLALLELMKRKLVEVEQAESFADLYVQGKGEEIS</sequence>
<name>SCPA_LISMO</name>
<reference key="1">
    <citation type="journal article" date="2001" name="Science">
        <title>Comparative genomics of Listeria species.</title>
        <authorList>
            <person name="Glaser P."/>
            <person name="Frangeul L."/>
            <person name="Buchrieser C."/>
            <person name="Rusniok C."/>
            <person name="Amend A."/>
            <person name="Baquero F."/>
            <person name="Berche P."/>
            <person name="Bloecker H."/>
            <person name="Brandt P."/>
            <person name="Chakraborty T."/>
            <person name="Charbit A."/>
            <person name="Chetouani F."/>
            <person name="Couve E."/>
            <person name="de Daruvar A."/>
            <person name="Dehoux P."/>
            <person name="Domann E."/>
            <person name="Dominguez-Bernal G."/>
            <person name="Duchaud E."/>
            <person name="Durant L."/>
            <person name="Dussurget O."/>
            <person name="Entian K.-D."/>
            <person name="Fsihi H."/>
            <person name="Garcia-del Portillo F."/>
            <person name="Garrido P."/>
            <person name="Gautier L."/>
            <person name="Goebel W."/>
            <person name="Gomez-Lopez N."/>
            <person name="Hain T."/>
            <person name="Hauf J."/>
            <person name="Jackson D."/>
            <person name="Jones L.-M."/>
            <person name="Kaerst U."/>
            <person name="Kreft J."/>
            <person name="Kuhn M."/>
            <person name="Kunst F."/>
            <person name="Kurapkat G."/>
            <person name="Madueno E."/>
            <person name="Maitournam A."/>
            <person name="Mata Vicente J."/>
            <person name="Ng E."/>
            <person name="Nedjari H."/>
            <person name="Nordsiek G."/>
            <person name="Novella S."/>
            <person name="de Pablos B."/>
            <person name="Perez-Diaz J.-C."/>
            <person name="Purcell R."/>
            <person name="Remmel B."/>
            <person name="Rose M."/>
            <person name="Schlueter T."/>
            <person name="Simoes N."/>
            <person name="Tierrez A."/>
            <person name="Vazquez-Boland J.-A."/>
            <person name="Voss H."/>
            <person name="Wehland J."/>
            <person name="Cossart P."/>
        </authorList>
    </citation>
    <scope>NUCLEOTIDE SEQUENCE [LARGE SCALE GENOMIC DNA]</scope>
    <source>
        <strain>ATCC BAA-679 / EGD-e</strain>
    </source>
</reference>
<keyword id="KW-0131">Cell cycle</keyword>
<keyword id="KW-0132">Cell division</keyword>
<keyword id="KW-0159">Chromosome partition</keyword>
<keyword id="KW-0963">Cytoplasm</keyword>
<keyword id="KW-1185">Reference proteome</keyword>
<comment type="function">
    <text evidence="1">Participates in chromosomal partition during cell division. May act via the formation of a condensin-like complex containing Smc and ScpB that pull DNA away from mid-cell into both cell halves.</text>
</comment>
<comment type="subunit">
    <text evidence="1">Component of a cohesin-like complex composed of ScpA, ScpB and the Smc homodimer, in which ScpA and ScpB bind to the head domain of Smc. The presence of the three proteins is required for the association of the complex with DNA.</text>
</comment>
<comment type="subcellular location">
    <subcellularLocation>
        <location evidence="1">Cytoplasm</location>
    </subcellularLocation>
    <text evidence="1">Associated with two foci at the outer edges of the nucleoid region in young cells, and at four foci within both cell halves in older cells.</text>
</comment>
<comment type="similarity">
    <text evidence="1">Belongs to the ScpA family.</text>
</comment>
<gene>
    <name evidence="1" type="primary">scpA</name>
    <name type="ordered locus">lmo1951</name>
</gene>